<accession>B8ELG2</accession>
<dbReference type="EMBL" id="CP001280">
    <property type="protein sequence ID" value="ACK49551.1"/>
    <property type="molecule type" value="Genomic_DNA"/>
</dbReference>
<dbReference type="RefSeq" id="WP_012589621.1">
    <property type="nucleotide sequence ID" value="NC_011666.1"/>
</dbReference>
<dbReference type="SMR" id="B8ELG2"/>
<dbReference type="STRING" id="395965.Msil_0579"/>
<dbReference type="KEGG" id="msl:Msil_0579"/>
<dbReference type="eggNOG" id="COG0088">
    <property type="taxonomic scope" value="Bacteria"/>
</dbReference>
<dbReference type="HOGENOM" id="CLU_041575_5_1_5"/>
<dbReference type="OrthoDB" id="9803201at2"/>
<dbReference type="Proteomes" id="UP000002257">
    <property type="component" value="Chromosome"/>
</dbReference>
<dbReference type="GO" id="GO:1990904">
    <property type="term" value="C:ribonucleoprotein complex"/>
    <property type="evidence" value="ECO:0007669"/>
    <property type="project" value="UniProtKB-KW"/>
</dbReference>
<dbReference type="GO" id="GO:0005840">
    <property type="term" value="C:ribosome"/>
    <property type="evidence" value="ECO:0007669"/>
    <property type="project" value="UniProtKB-KW"/>
</dbReference>
<dbReference type="GO" id="GO:0019843">
    <property type="term" value="F:rRNA binding"/>
    <property type="evidence" value="ECO:0007669"/>
    <property type="project" value="UniProtKB-UniRule"/>
</dbReference>
<dbReference type="GO" id="GO:0003735">
    <property type="term" value="F:structural constituent of ribosome"/>
    <property type="evidence" value="ECO:0007669"/>
    <property type="project" value="InterPro"/>
</dbReference>
<dbReference type="GO" id="GO:0006412">
    <property type="term" value="P:translation"/>
    <property type="evidence" value="ECO:0007669"/>
    <property type="project" value="UniProtKB-UniRule"/>
</dbReference>
<dbReference type="Gene3D" id="3.40.1370.10">
    <property type="match status" value="1"/>
</dbReference>
<dbReference type="HAMAP" id="MF_01328_B">
    <property type="entry name" value="Ribosomal_uL4_B"/>
    <property type="match status" value="1"/>
</dbReference>
<dbReference type="InterPro" id="IPR002136">
    <property type="entry name" value="Ribosomal_uL4"/>
</dbReference>
<dbReference type="InterPro" id="IPR013005">
    <property type="entry name" value="Ribosomal_uL4-like"/>
</dbReference>
<dbReference type="InterPro" id="IPR023574">
    <property type="entry name" value="Ribosomal_uL4_dom_sf"/>
</dbReference>
<dbReference type="NCBIfam" id="TIGR03953">
    <property type="entry name" value="rplD_bact"/>
    <property type="match status" value="1"/>
</dbReference>
<dbReference type="PANTHER" id="PTHR10746">
    <property type="entry name" value="50S RIBOSOMAL PROTEIN L4"/>
    <property type="match status" value="1"/>
</dbReference>
<dbReference type="PANTHER" id="PTHR10746:SF6">
    <property type="entry name" value="LARGE RIBOSOMAL SUBUNIT PROTEIN UL4M"/>
    <property type="match status" value="1"/>
</dbReference>
<dbReference type="Pfam" id="PF00573">
    <property type="entry name" value="Ribosomal_L4"/>
    <property type="match status" value="1"/>
</dbReference>
<dbReference type="SUPFAM" id="SSF52166">
    <property type="entry name" value="Ribosomal protein L4"/>
    <property type="match status" value="1"/>
</dbReference>
<protein>
    <recommendedName>
        <fullName evidence="1">Large ribosomal subunit protein uL4</fullName>
    </recommendedName>
    <alternativeName>
        <fullName evidence="2">50S ribosomal protein L4</fullName>
    </alternativeName>
</protein>
<reference key="1">
    <citation type="journal article" date="2010" name="J. Bacteriol.">
        <title>Complete genome sequence of the aerobic facultative methanotroph Methylocella silvestris BL2.</title>
        <authorList>
            <person name="Chen Y."/>
            <person name="Crombie A."/>
            <person name="Rahman M.T."/>
            <person name="Dedysh S.N."/>
            <person name="Liesack W."/>
            <person name="Stott M.B."/>
            <person name="Alam M."/>
            <person name="Theisen A.R."/>
            <person name="Murrell J.C."/>
            <person name="Dunfield P.F."/>
        </authorList>
    </citation>
    <scope>NUCLEOTIDE SEQUENCE [LARGE SCALE GENOMIC DNA]</scope>
    <source>
        <strain>DSM 15510 / CIP 108128 / LMG 27833 / NCIMB 13906 / BL2</strain>
    </source>
</reference>
<comment type="function">
    <text evidence="1">One of the primary rRNA binding proteins, this protein initially binds near the 5'-end of the 23S rRNA. It is important during the early stages of 50S assembly. It makes multiple contacts with different domains of the 23S rRNA in the assembled 50S subunit and ribosome.</text>
</comment>
<comment type="function">
    <text evidence="1">Forms part of the polypeptide exit tunnel.</text>
</comment>
<comment type="subunit">
    <text evidence="1">Part of the 50S ribosomal subunit.</text>
</comment>
<comment type="similarity">
    <text evidence="1">Belongs to the universal ribosomal protein uL4 family.</text>
</comment>
<sequence>MKIDITSLNGDSAGSIDLDDSIFGLEPRQDLIARMVRYQLAKRRAGTHKTKGRAEIARTGKKLYKQKGTGSARHGSARVPQFRGGGRAFGPVVRSHAHDLPKKVRALALKHALSAKAQGGGIIVWSDASATDAKTKALKASFAKAGLLSALIIDGAEVEQNFALAARNIPQIDVLPVQGINVYDILRREKLVLTRAAIDALEARFK</sequence>
<keyword id="KW-1185">Reference proteome</keyword>
<keyword id="KW-0687">Ribonucleoprotein</keyword>
<keyword id="KW-0689">Ribosomal protein</keyword>
<keyword id="KW-0694">RNA-binding</keyword>
<keyword id="KW-0699">rRNA-binding</keyword>
<proteinExistence type="inferred from homology"/>
<organism>
    <name type="scientific">Methylocella silvestris (strain DSM 15510 / CIP 108128 / LMG 27833 / NCIMB 13906 / BL2)</name>
    <dbReference type="NCBI Taxonomy" id="395965"/>
    <lineage>
        <taxon>Bacteria</taxon>
        <taxon>Pseudomonadati</taxon>
        <taxon>Pseudomonadota</taxon>
        <taxon>Alphaproteobacteria</taxon>
        <taxon>Hyphomicrobiales</taxon>
        <taxon>Beijerinckiaceae</taxon>
        <taxon>Methylocella</taxon>
    </lineage>
</organism>
<evidence type="ECO:0000255" key="1">
    <source>
        <dbReference type="HAMAP-Rule" id="MF_01328"/>
    </source>
</evidence>
<evidence type="ECO:0000305" key="2"/>
<name>RL4_METSB</name>
<feature type="chain" id="PRO_1000166016" description="Large ribosomal subunit protein uL4">
    <location>
        <begin position="1"/>
        <end position="206"/>
    </location>
</feature>
<gene>
    <name evidence="1" type="primary">rplD</name>
    <name type="ordered locus">Msil_0579</name>
</gene>